<feature type="chain" id="PRO_0000374496" description="tRNA-2-methylthio-N(6)-dimethylallyladenosine synthase">
    <location>
        <begin position="1"/>
        <end position="473"/>
    </location>
</feature>
<feature type="domain" description="MTTase N-terminal" evidence="1">
    <location>
        <begin position="5"/>
        <end position="125"/>
    </location>
</feature>
<feature type="domain" description="Radical SAM core" evidence="2">
    <location>
        <begin position="152"/>
        <end position="384"/>
    </location>
</feature>
<feature type="domain" description="TRAM" evidence="1">
    <location>
        <begin position="387"/>
        <end position="459"/>
    </location>
</feature>
<feature type="binding site" evidence="1">
    <location>
        <position position="14"/>
    </location>
    <ligand>
        <name>[4Fe-4S] cluster</name>
        <dbReference type="ChEBI" id="CHEBI:49883"/>
        <label>1</label>
    </ligand>
</feature>
<feature type="binding site" evidence="1">
    <location>
        <position position="50"/>
    </location>
    <ligand>
        <name>[4Fe-4S] cluster</name>
        <dbReference type="ChEBI" id="CHEBI:49883"/>
        <label>1</label>
    </ligand>
</feature>
<feature type="binding site" evidence="1">
    <location>
        <position position="88"/>
    </location>
    <ligand>
        <name>[4Fe-4S] cluster</name>
        <dbReference type="ChEBI" id="CHEBI:49883"/>
        <label>1</label>
    </ligand>
</feature>
<feature type="binding site" evidence="1">
    <location>
        <position position="166"/>
    </location>
    <ligand>
        <name>[4Fe-4S] cluster</name>
        <dbReference type="ChEBI" id="CHEBI:49883"/>
        <label>2</label>
        <note>4Fe-4S-S-AdoMet</note>
    </ligand>
</feature>
<feature type="binding site" evidence="1">
    <location>
        <position position="170"/>
    </location>
    <ligand>
        <name>[4Fe-4S] cluster</name>
        <dbReference type="ChEBI" id="CHEBI:49883"/>
        <label>2</label>
        <note>4Fe-4S-S-AdoMet</note>
    </ligand>
</feature>
<feature type="binding site" evidence="1">
    <location>
        <position position="173"/>
    </location>
    <ligand>
        <name>[4Fe-4S] cluster</name>
        <dbReference type="ChEBI" id="CHEBI:49883"/>
        <label>2</label>
        <note>4Fe-4S-S-AdoMet</note>
    </ligand>
</feature>
<organism>
    <name type="scientific">Rhodopseudomonas palustris (strain BisB5)</name>
    <dbReference type="NCBI Taxonomy" id="316057"/>
    <lineage>
        <taxon>Bacteria</taxon>
        <taxon>Pseudomonadati</taxon>
        <taxon>Pseudomonadota</taxon>
        <taxon>Alphaproteobacteria</taxon>
        <taxon>Hyphomicrobiales</taxon>
        <taxon>Nitrobacteraceae</taxon>
        <taxon>Rhodopseudomonas</taxon>
    </lineage>
</organism>
<keyword id="KW-0004">4Fe-4S</keyword>
<keyword id="KW-0963">Cytoplasm</keyword>
<keyword id="KW-0408">Iron</keyword>
<keyword id="KW-0411">Iron-sulfur</keyword>
<keyword id="KW-0479">Metal-binding</keyword>
<keyword id="KW-0949">S-adenosyl-L-methionine</keyword>
<keyword id="KW-0808">Transferase</keyword>
<keyword id="KW-0819">tRNA processing</keyword>
<sequence length="473" mass="51739">MAPPRKLHIKSYGCQMNVYDAQRMVDVLAPEGFVETATVDDADLVILNTCHIREKASEKVYSELGRLRLARDEAASSGRRMQIAVAGCVAQAEGEEIVRRAPVVDVVVGPQSYHHLPQLLARADQAGRALETEFPVEDKFGFLPQPRPETIRARGISAFVTVQEGCDKFCTFCVVPYTRGAEVSRPVSAIIDDVKRLADNGVREITLIGQNVNAYHGEGPDSRAWTLGRLLRRLAAVPGIVRLRYSTSHPNDVDDELIEAHRDLDALMPFVHLPVQSGSDPILAAMNRKHTAADYRRVIDRFRAVRPQIAFSSDFIVGFPGETEADFAATLALVTQIGYAGAYSFKYSPRPGTPAADMQEMVPAAVMDERLERLQQLIDSQQSAFNKAAIGQTVDVLFERAGRKPGQIVGRTAYLQPAHVFPGPMFLGPGMAPDSLVGQILPVRVDSLERYSLLGELAAKPPQHARPLAATGA</sequence>
<accession>Q13EK7</accession>
<dbReference type="EC" id="2.8.4.3" evidence="1"/>
<dbReference type="EMBL" id="CP000283">
    <property type="protein sequence ID" value="ABE37482.1"/>
    <property type="molecule type" value="Genomic_DNA"/>
</dbReference>
<dbReference type="SMR" id="Q13EK7"/>
<dbReference type="STRING" id="316057.RPD_0242"/>
<dbReference type="KEGG" id="rpd:RPD_0242"/>
<dbReference type="eggNOG" id="COG0621">
    <property type="taxonomic scope" value="Bacteria"/>
</dbReference>
<dbReference type="HOGENOM" id="CLU_018697_2_0_5"/>
<dbReference type="BioCyc" id="RPAL316057:RPD_RS01225-MONOMER"/>
<dbReference type="Proteomes" id="UP000001818">
    <property type="component" value="Chromosome"/>
</dbReference>
<dbReference type="GO" id="GO:0005829">
    <property type="term" value="C:cytosol"/>
    <property type="evidence" value="ECO:0007669"/>
    <property type="project" value="TreeGrafter"/>
</dbReference>
<dbReference type="GO" id="GO:0051539">
    <property type="term" value="F:4 iron, 4 sulfur cluster binding"/>
    <property type="evidence" value="ECO:0007669"/>
    <property type="project" value="UniProtKB-UniRule"/>
</dbReference>
<dbReference type="GO" id="GO:0046872">
    <property type="term" value="F:metal ion binding"/>
    <property type="evidence" value="ECO:0007669"/>
    <property type="project" value="UniProtKB-KW"/>
</dbReference>
<dbReference type="GO" id="GO:0035597">
    <property type="term" value="F:N6-isopentenyladenosine methylthiotransferase activity"/>
    <property type="evidence" value="ECO:0007669"/>
    <property type="project" value="TreeGrafter"/>
</dbReference>
<dbReference type="CDD" id="cd01335">
    <property type="entry name" value="Radical_SAM"/>
    <property type="match status" value="1"/>
</dbReference>
<dbReference type="FunFam" id="3.40.50.12160:FF:000003">
    <property type="entry name" value="CDK5 regulatory subunit-associated protein 1"/>
    <property type="match status" value="1"/>
</dbReference>
<dbReference type="FunFam" id="3.80.30.20:FF:000001">
    <property type="entry name" value="tRNA-2-methylthio-N(6)-dimethylallyladenosine synthase 2"/>
    <property type="match status" value="1"/>
</dbReference>
<dbReference type="Gene3D" id="3.40.50.12160">
    <property type="entry name" value="Methylthiotransferase, N-terminal domain"/>
    <property type="match status" value="1"/>
</dbReference>
<dbReference type="Gene3D" id="3.80.30.20">
    <property type="entry name" value="tm_1862 like domain"/>
    <property type="match status" value="1"/>
</dbReference>
<dbReference type="HAMAP" id="MF_01864">
    <property type="entry name" value="tRNA_metthiotr_MiaB"/>
    <property type="match status" value="1"/>
</dbReference>
<dbReference type="InterPro" id="IPR006638">
    <property type="entry name" value="Elp3/MiaA/NifB-like_rSAM"/>
</dbReference>
<dbReference type="InterPro" id="IPR005839">
    <property type="entry name" value="Methylthiotransferase"/>
</dbReference>
<dbReference type="InterPro" id="IPR020612">
    <property type="entry name" value="Methylthiotransferase_CS"/>
</dbReference>
<dbReference type="InterPro" id="IPR013848">
    <property type="entry name" value="Methylthiotransferase_N"/>
</dbReference>
<dbReference type="InterPro" id="IPR038135">
    <property type="entry name" value="Methylthiotransferase_N_sf"/>
</dbReference>
<dbReference type="InterPro" id="IPR006463">
    <property type="entry name" value="MiaB_methiolase"/>
</dbReference>
<dbReference type="InterPro" id="IPR007197">
    <property type="entry name" value="rSAM"/>
</dbReference>
<dbReference type="InterPro" id="IPR023404">
    <property type="entry name" value="rSAM_horseshoe"/>
</dbReference>
<dbReference type="InterPro" id="IPR002792">
    <property type="entry name" value="TRAM_dom"/>
</dbReference>
<dbReference type="NCBIfam" id="TIGR01574">
    <property type="entry name" value="miaB-methiolase"/>
    <property type="match status" value="1"/>
</dbReference>
<dbReference type="NCBIfam" id="TIGR00089">
    <property type="entry name" value="MiaB/RimO family radical SAM methylthiotransferase"/>
    <property type="match status" value="1"/>
</dbReference>
<dbReference type="PANTHER" id="PTHR43020">
    <property type="entry name" value="CDK5 REGULATORY SUBUNIT-ASSOCIATED PROTEIN 1"/>
    <property type="match status" value="1"/>
</dbReference>
<dbReference type="PANTHER" id="PTHR43020:SF2">
    <property type="entry name" value="MITOCHONDRIAL TRNA METHYLTHIOTRANSFERASE CDK5RAP1"/>
    <property type="match status" value="1"/>
</dbReference>
<dbReference type="Pfam" id="PF04055">
    <property type="entry name" value="Radical_SAM"/>
    <property type="match status" value="1"/>
</dbReference>
<dbReference type="Pfam" id="PF01938">
    <property type="entry name" value="TRAM"/>
    <property type="match status" value="1"/>
</dbReference>
<dbReference type="Pfam" id="PF00919">
    <property type="entry name" value="UPF0004"/>
    <property type="match status" value="1"/>
</dbReference>
<dbReference type="SFLD" id="SFLDF00273">
    <property type="entry name" value="(dimethylallyl)adenosine_tRNA"/>
    <property type="match status" value="1"/>
</dbReference>
<dbReference type="SFLD" id="SFLDG01082">
    <property type="entry name" value="B12-binding_domain_containing"/>
    <property type="match status" value="1"/>
</dbReference>
<dbReference type="SFLD" id="SFLDS00029">
    <property type="entry name" value="Radical_SAM"/>
    <property type="match status" value="1"/>
</dbReference>
<dbReference type="SMART" id="SM00729">
    <property type="entry name" value="Elp3"/>
    <property type="match status" value="1"/>
</dbReference>
<dbReference type="SUPFAM" id="SSF102114">
    <property type="entry name" value="Radical SAM enzymes"/>
    <property type="match status" value="1"/>
</dbReference>
<dbReference type="PROSITE" id="PS51449">
    <property type="entry name" value="MTTASE_N"/>
    <property type="match status" value="1"/>
</dbReference>
<dbReference type="PROSITE" id="PS01278">
    <property type="entry name" value="MTTASE_RADICAL"/>
    <property type="match status" value="1"/>
</dbReference>
<dbReference type="PROSITE" id="PS51918">
    <property type="entry name" value="RADICAL_SAM"/>
    <property type="match status" value="1"/>
</dbReference>
<dbReference type="PROSITE" id="PS50926">
    <property type="entry name" value="TRAM"/>
    <property type="match status" value="1"/>
</dbReference>
<gene>
    <name evidence="1" type="primary">miaB</name>
    <name type="ordered locus">RPD_0242</name>
</gene>
<comment type="function">
    <text evidence="1">Catalyzes the methylthiolation of N6-(dimethylallyl)adenosine (i(6)A), leading to the formation of 2-methylthio-N6-(dimethylallyl)adenosine (ms(2)i(6)A) at position 37 in tRNAs that read codons beginning with uridine.</text>
</comment>
<comment type="catalytic activity">
    <reaction evidence="1">
        <text>N(6)-dimethylallyladenosine(37) in tRNA + (sulfur carrier)-SH + AH2 + 2 S-adenosyl-L-methionine = 2-methylsulfanyl-N(6)-dimethylallyladenosine(37) in tRNA + (sulfur carrier)-H + 5'-deoxyadenosine + L-methionine + A + S-adenosyl-L-homocysteine + 2 H(+)</text>
        <dbReference type="Rhea" id="RHEA:37067"/>
        <dbReference type="Rhea" id="RHEA-COMP:10375"/>
        <dbReference type="Rhea" id="RHEA-COMP:10376"/>
        <dbReference type="Rhea" id="RHEA-COMP:14737"/>
        <dbReference type="Rhea" id="RHEA-COMP:14739"/>
        <dbReference type="ChEBI" id="CHEBI:13193"/>
        <dbReference type="ChEBI" id="CHEBI:15378"/>
        <dbReference type="ChEBI" id="CHEBI:17319"/>
        <dbReference type="ChEBI" id="CHEBI:17499"/>
        <dbReference type="ChEBI" id="CHEBI:29917"/>
        <dbReference type="ChEBI" id="CHEBI:57844"/>
        <dbReference type="ChEBI" id="CHEBI:57856"/>
        <dbReference type="ChEBI" id="CHEBI:59789"/>
        <dbReference type="ChEBI" id="CHEBI:64428"/>
        <dbReference type="ChEBI" id="CHEBI:74415"/>
        <dbReference type="ChEBI" id="CHEBI:74417"/>
        <dbReference type="EC" id="2.8.4.3"/>
    </reaction>
</comment>
<comment type="cofactor">
    <cofactor evidence="1">
        <name>[4Fe-4S] cluster</name>
        <dbReference type="ChEBI" id="CHEBI:49883"/>
    </cofactor>
    <text evidence="1">Binds 2 [4Fe-4S] clusters. One cluster is coordinated with 3 cysteines and an exchangeable S-adenosyl-L-methionine.</text>
</comment>
<comment type="subunit">
    <text evidence="1">Monomer.</text>
</comment>
<comment type="subcellular location">
    <subcellularLocation>
        <location evidence="1">Cytoplasm</location>
    </subcellularLocation>
</comment>
<comment type="similarity">
    <text evidence="1">Belongs to the methylthiotransferase family. MiaB subfamily.</text>
</comment>
<protein>
    <recommendedName>
        <fullName evidence="1">tRNA-2-methylthio-N(6)-dimethylallyladenosine synthase</fullName>
        <ecNumber evidence="1">2.8.4.3</ecNumber>
    </recommendedName>
    <alternativeName>
        <fullName evidence="1">(Dimethylallyl)adenosine tRNA methylthiotransferase MiaB</fullName>
    </alternativeName>
    <alternativeName>
        <fullName evidence="1">tRNA-i(6)A37 methylthiotransferase</fullName>
    </alternativeName>
</protein>
<name>MIAB_RHOPS</name>
<proteinExistence type="inferred from homology"/>
<reference key="1">
    <citation type="submission" date="2006-03" db="EMBL/GenBank/DDBJ databases">
        <title>Complete sequence of Rhodopseudomonas palustris BisB5.</title>
        <authorList>
            <consortium name="US DOE Joint Genome Institute"/>
            <person name="Copeland A."/>
            <person name="Lucas S."/>
            <person name="Lapidus A."/>
            <person name="Barry K."/>
            <person name="Detter J.C."/>
            <person name="Glavina del Rio T."/>
            <person name="Hammon N."/>
            <person name="Israni S."/>
            <person name="Dalin E."/>
            <person name="Tice H."/>
            <person name="Pitluck S."/>
            <person name="Chain P."/>
            <person name="Malfatti S."/>
            <person name="Shin M."/>
            <person name="Vergez L."/>
            <person name="Schmutz J."/>
            <person name="Larimer F."/>
            <person name="Land M."/>
            <person name="Hauser L."/>
            <person name="Pelletier D.A."/>
            <person name="Kyrpides N."/>
            <person name="Lykidis A."/>
            <person name="Oda Y."/>
            <person name="Harwood C.S."/>
            <person name="Richardson P."/>
        </authorList>
    </citation>
    <scope>NUCLEOTIDE SEQUENCE [LARGE SCALE GENOMIC DNA]</scope>
    <source>
        <strain>BisB5</strain>
    </source>
</reference>
<evidence type="ECO:0000255" key="1">
    <source>
        <dbReference type="HAMAP-Rule" id="MF_01864"/>
    </source>
</evidence>
<evidence type="ECO:0000255" key="2">
    <source>
        <dbReference type="PROSITE-ProRule" id="PRU01266"/>
    </source>
</evidence>